<proteinExistence type="evidence at protein level"/>
<protein>
    <recommendedName>
        <fullName>H(+)/Cl(-) exchange transporter ClcA</fullName>
    </recommendedName>
</protein>
<gene>
    <name type="primary">clcA</name>
    <name type="synonym">eriC</name>
    <name type="ordered locus">STM0203</name>
</gene>
<name>CLCA_SALTY</name>
<reference key="1">
    <citation type="journal article" date="2001" name="Nature">
        <title>Complete genome sequence of Salmonella enterica serovar Typhimurium LT2.</title>
        <authorList>
            <person name="McClelland M."/>
            <person name="Sanderson K.E."/>
            <person name="Spieth J."/>
            <person name="Clifton S.W."/>
            <person name="Latreille P."/>
            <person name="Courtney L."/>
            <person name="Porwollik S."/>
            <person name="Ali J."/>
            <person name="Dante M."/>
            <person name="Du F."/>
            <person name="Hou S."/>
            <person name="Layman D."/>
            <person name="Leonard S."/>
            <person name="Nguyen C."/>
            <person name="Scott K."/>
            <person name="Holmes A."/>
            <person name="Grewal N."/>
            <person name="Mulvaney E."/>
            <person name="Ryan E."/>
            <person name="Sun H."/>
            <person name="Florea L."/>
            <person name="Miller W."/>
            <person name="Stoneking T."/>
            <person name="Nhan M."/>
            <person name="Waterston R."/>
            <person name="Wilson R.K."/>
        </authorList>
    </citation>
    <scope>NUCLEOTIDE SEQUENCE [LARGE SCALE GENOMIC DNA]</scope>
    <source>
        <strain>LT2 / SGSC1412 / ATCC 700720</strain>
    </source>
</reference>
<reference key="2">
    <citation type="journal article" date="2002" name="Nature">
        <title>X-ray structure of a ClC chloride channel at 3.0 A reveals the molecular basis of anion selectivity.</title>
        <authorList>
            <person name="Dutzler R."/>
            <person name="Campbell E.B."/>
            <person name="Cadene M."/>
            <person name="Chait B.T."/>
            <person name="MacKinnon R."/>
        </authorList>
    </citation>
    <scope>X-RAY CRYSTALLOGRAPHY (3.0 ANGSTROMS)</scope>
    <scope>FUNCTION</scope>
</reference>
<evidence type="ECO:0000255" key="1">
    <source>
        <dbReference type="HAMAP-Rule" id="MF_01128"/>
    </source>
</evidence>
<evidence type="ECO:0000269" key="2">
    <source>
    </source>
</evidence>
<evidence type="ECO:0000305" key="3"/>
<evidence type="ECO:0007829" key="4">
    <source>
        <dbReference type="PDB" id="1KPL"/>
    </source>
</evidence>
<sequence>MKTDTSTFLAQQIVRLRRRDQIRRLMQRDKTPLAILFMAAVVGTLTGLVGVAFEKAVSWVQNMRIGALVQVADHAFLLWPLAFILSALLAMVGYFLVRKFAPEAGGSGIPEIEGALEELRPVRWWRVLPVKFIGGMGTLGAGMVLGREGPTVQIGGNLGRMVLDVFRMRSAEARHTLLATGAAAGLSAAFNAPLAGILFIIEEMRPQFRYNLISIKAVFTGVIMSSIVFRIFNGEAPIIEVGKLSDAPVNTLWLYLILGIIFGCVGPVFNSLVLRTQDMFQRFHGGEIKKWVLMGGAIGGLCGILGLIEPAAAGGGFNLIPIAAAGNFSVGLLLFIFITRVVTTLLCFSSGAPGGIFAPMLALGTLLGTAFGMAAAVLFPQYHLEAGTFAIAGMGALMAASVRAPLTGIVLVLEMTDNYQLILPMIITCLGATLLAQFLGGKPLYSTILARTLAKQDAEQAEKNQNAPADENT</sequence>
<keyword id="KW-0002">3D-structure</keyword>
<keyword id="KW-0050">Antiport</keyword>
<keyword id="KW-0997">Cell inner membrane</keyword>
<keyword id="KW-1003">Cell membrane</keyword>
<keyword id="KW-0868">Chloride</keyword>
<keyword id="KW-0406">Ion transport</keyword>
<keyword id="KW-0472">Membrane</keyword>
<keyword id="KW-1185">Reference proteome</keyword>
<keyword id="KW-0812">Transmembrane</keyword>
<keyword id="KW-1133">Transmembrane helix</keyword>
<keyword id="KW-0813">Transport</keyword>
<dbReference type="EMBL" id="AE006468">
    <property type="protein sequence ID" value="AAL19167.1"/>
    <property type="molecule type" value="Genomic_DNA"/>
</dbReference>
<dbReference type="RefSeq" id="WP_000845427.1">
    <property type="nucleotide sequence ID" value="NC_003197.2"/>
</dbReference>
<dbReference type="PDB" id="1KPL">
    <property type="method" value="X-ray"/>
    <property type="resolution" value="3.00 A"/>
    <property type="chains" value="A/B/C/D=1-473"/>
</dbReference>
<dbReference type="PDBsum" id="1KPL"/>
<dbReference type="SMR" id="Q8ZRP8"/>
<dbReference type="STRING" id="99287.STM0203"/>
<dbReference type="PaxDb" id="99287-STM0203"/>
<dbReference type="ABCD" id="Q8ZRP8">
    <property type="antibodies" value="1 sequenced antibody"/>
</dbReference>
<dbReference type="KEGG" id="stm:STM0203"/>
<dbReference type="PATRIC" id="fig|99287.12.peg.216"/>
<dbReference type="HOGENOM" id="CLU_015263_7_0_6"/>
<dbReference type="PhylomeDB" id="Q8ZRP8"/>
<dbReference type="BioCyc" id="SENT99287:STM0203-MONOMER"/>
<dbReference type="EvolutionaryTrace" id="Q8ZRP8"/>
<dbReference type="Proteomes" id="UP000001014">
    <property type="component" value="Chromosome"/>
</dbReference>
<dbReference type="GO" id="GO:0005886">
    <property type="term" value="C:plasma membrane"/>
    <property type="evidence" value="ECO:0000318"/>
    <property type="project" value="GO_Central"/>
</dbReference>
<dbReference type="GO" id="GO:0015297">
    <property type="term" value="F:antiporter activity"/>
    <property type="evidence" value="ECO:0007669"/>
    <property type="project" value="UniProtKB-UniRule"/>
</dbReference>
<dbReference type="GO" id="GO:0005247">
    <property type="term" value="F:voltage-gated chloride channel activity"/>
    <property type="evidence" value="ECO:0000318"/>
    <property type="project" value="GO_Central"/>
</dbReference>
<dbReference type="CDD" id="cd01031">
    <property type="entry name" value="EriC"/>
    <property type="match status" value="1"/>
</dbReference>
<dbReference type="FunFam" id="1.10.3080.10:FF:000005">
    <property type="entry name" value="H(+)/Cl(-) exchange transporter ClcA"/>
    <property type="match status" value="1"/>
</dbReference>
<dbReference type="Gene3D" id="1.10.3080.10">
    <property type="entry name" value="Clc chloride channel"/>
    <property type="match status" value="1"/>
</dbReference>
<dbReference type="HAMAP" id="MF_01128">
    <property type="entry name" value="CLC_ClcA"/>
    <property type="match status" value="1"/>
</dbReference>
<dbReference type="InterPro" id="IPR023861">
    <property type="entry name" value="Cl-channel_ClcA"/>
</dbReference>
<dbReference type="InterPro" id="IPR014743">
    <property type="entry name" value="Cl-channel_core"/>
</dbReference>
<dbReference type="InterPro" id="IPR001807">
    <property type="entry name" value="ClC"/>
</dbReference>
<dbReference type="NCBIfam" id="NF003640">
    <property type="entry name" value="PRK05277.1"/>
    <property type="match status" value="1"/>
</dbReference>
<dbReference type="PANTHER" id="PTHR45711">
    <property type="entry name" value="CHLORIDE CHANNEL PROTEIN"/>
    <property type="match status" value="1"/>
</dbReference>
<dbReference type="PANTHER" id="PTHR45711:SF6">
    <property type="entry name" value="CHLORIDE CHANNEL PROTEIN"/>
    <property type="match status" value="1"/>
</dbReference>
<dbReference type="Pfam" id="PF00654">
    <property type="entry name" value="Voltage_CLC"/>
    <property type="match status" value="1"/>
</dbReference>
<dbReference type="PRINTS" id="PR00762">
    <property type="entry name" value="CLCHANNEL"/>
</dbReference>
<dbReference type="SUPFAM" id="SSF81340">
    <property type="entry name" value="Clc chloride channel"/>
    <property type="match status" value="1"/>
</dbReference>
<accession>Q8ZRP8</accession>
<organism>
    <name type="scientific">Salmonella typhimurium (strain LT2 / SGSC1412 / ATCC 700720)</name>
    <dbReference type="NCBI Taxonomy" id="99287"/>
    <lineage>
        <taxon>Bacteria</taxon>
        <taxon>Pseudomonadati</taxon>
        <taxon>Pseudomonadota</taxon>
        <taxon>Gammaproteobacteria</taxon>
        <taxon>Enterobacterales</taxon>
        <taxon>Enterobacteriaceae</taxon>
        <taxon>Salmonella</taxon>
    </lineage>
</organism>
<comment type="function">
    <text evidence="1 2">Proton-coupled chloride transporter. Functions as antiport system and exchanges two chloride ions for 1 proton. Probably acts as an electrical shunt for an outwardly-directed proton pump that is linked to amino acid decarboxylation, as part of the extreme acid resistance (XAR) response.</text>
</comment>
<comment type="catalytic activity">
    <reaction evidence="1">
        <text>2 chloride(in) + H(+)(out) = 2 chloride(out) + H(+)(in)</text>
        <dbReference type="Rhea" id="RHEA:29567"/>
        <dbReference type="ChEBI" id="CHEBI:15378"/>
        <dbReference type="ChEBI" id="CHEBI:17996"/>
    </reaction>
</comment>
<comment type="subunit">
    <text>Homodimer.</text>
</comment>
<comment type="subcellular location">
    <subcellularLocation>
        <location evidence="3">Cell inner membrane</location>
        <topology evidence="3">Multi-pass membrane protein</topology>
    </subcellularLocation>
</comment>
<comment type="similarity">
    <text evidence="3">Belongs to the chloride channel (TC 2.A.49) family. ClcA subfamily.</text>
</comment>
<feature type="chain" id="PRO_0000094478" description="H(+)/Cl(-) exchange transporter ClcA">
    <location>
        <begin position="1"/>
        <end position="473"/>
    </location>
</feature>
<feature type="topological domain" description="Cytoplasmic">
    <location>
        <begin position="1"/>
        <end position="32"/>
    </location>
</feature>
<feature type="transmembrane region" description="Helical">
    <location>
        <begin position="33"/>
        <end position="69"/>
    </location>
</feature>
<feature type="topological domain" description="Periplasmic">
    <location>
        <begin position="70"/>
        <end position="76"/>
    </location>
</feature>
<feature type="transmembrane region" description="Helical">
    <location>
        <begin position="77"/>
        <end position="100"/>
    </location>
</feature>
<feature type="intramembrane region" description="Helical">
    <location>
        <begin position="109"/>
        <end position="116"/>
    </location>
</feature>
<feature type="topological domain" description="Cytoplasmic">
    <location>
        <begin position="117"/>
        <end position="123"/>
    </location>
</feature>
<feature type="transmembrane region" description="Helical">
    <location>
        <begin position="124"/>
        <end position="141"/>
    </location>
</feature>
<feature type="transmembrane region" description="Helical">
    <location>
        <begin position="148"/>
        <end position="166"/>
    </location>
</feature>
<feature type="topological domain" description="Cytoplasmic">
    <location>
        <begin position="167"/>
        <end position="176"/>
    </location>
</feature>
<feature type="intramembrane region" description="Helical">
    <location>
        <begin position="177"/>
        <end position="189"/>
    </location>
</feature>
<feature type="intramembrane region" description="Note=Loop between two helices">
    <location>
        <begin position="190"/>
        <end position="192"/>
    </location>
</feature>
<feature type="intramembrane region" description="Helical">
    <location>
        <begin position="193"/>
        <end position="201"/>
    </location>
</feature>
<feature type="topological domain" description="Cytoplasmic">
    <location>
        <begin position="202"/>
        <end position="214"/>
    </location>
</feature>
<feature type="transmembrane region" description="Helical">
    <location>
        <begin position="215"/>
        <end position="232"/>
    </location>
</feature>
<feature type="topological domain" description="Periplasmic">
    <location>
        <begin position="233"/>
        <end position="252"/>
    </location>
</feature>
<feature type="transmembrane region" description="Helical">
    <location>
        <begin position="253"/>
        <end position="281"/>
    </location>
</feature>
<feature type="topological domain" description="Cytoplasmic">
    <location>
        <begin position="282"/>
        <end position="287"/>
    </location>
</feature>
<feature type="transmembrane region" description="Helical">
    <location>
        <begin position="288"/>
        <end position="308"/>
    </location>
</feature>
<feature type="topological domain" description="Periplasmic">
    <location>
        <begin position="309"/>
        <end position="329"/>
    </location>
</feature>
<feature type="transmembrane region" description="Helical">
    <location>
        <begin position="330"/>
        <end position="349"/>
    </location>
</feature>
<feature type="topological domain" description="Cytoplasmic">
    <location>
        <begin position="350"/>
        <end position="354"/>
    </location>
</feature>
<feature type="transmembrane region" description="Helical">
    <location>
        <begin position="355"/>
        <end position="378"/>
    </location>
</feature>
<feature type="topological domain" description="Periplasmic">
    <location>
        <begin position="379"/>
        <end position="386"/>
    </location>
</feature>
<feature type="intramembrane region" description="Helical">
    <location>
        <begin position="387"/>
        <end position="401"/>
    </location>
</feature>
<feature type="intramembrane region" description="Note=Loop between two helices">
    <location>
        <begin position="402"/>
        <end position="404"/>
    </location>
</feature>
<feature type="intramembrane region" description="Helical">
    <location>
        <begin position="405"/>
        <end position="416"/>
    </location>
</feature>
<feature type="intramembrane region" description="Note=Loop between two helices">
    <location>
        <begin position="417"/>
        <end position="421"/>
    </location>
</feature>
<feature type="transmembrane region" description="Helical">
    <location>
        <begin position="422"/>
        <end position="438"/>
    </location>
</feature>
<feature type="topological domain" description="Cytoplasmic">
    <location>
        <begin position="439"/>
        <end position="473"/>
    </location>
</feature>
<feature type="short sequence motif" description="Selectivity filter part_1">
    <location>
        <begin position="106"/>
        <end position="110"/>
    </location>
</feature>
<feature type="short sequence motif" description="Selectivity filter part_2">
    <location>
        <begin position="146"/>
        <end position="150"/>
    </location>
</feature>
<feature type="short sequence motif" description="Selectivity filter part_3">
    <location>
        <begin position="355"/>
        <end position="359"/>
    </location>
</feature>
<feature type="binding site">
    <location>
        <position position="107"/>
    </location>
    <ligand>
        <name>chloride</name>
        <dbReference type="ChEBI" id="CHEBI:17996"/>
    </ligand>
</feature>
<feature type="binding site">
    <location>
        <position position="356"/>
    </location>
    <ligand>
        <name>chloride</name>
        <dbReference type="ChEBI" id="CHEBI:17996"/>
    </ligand>
</feature>
<feature type="binding site">
    <location>
        <position position="357"/>
    </location>
    <ligand>
        <name>chloride</name>
        <dbReference type="ChEBI" id="CHEBI:17996"/>
    </ligand>
</feature>
<feature type="binding site">
    <location>
        <position position="445"/>
    </location>
    <ligand>
        <name>chloride</name>
        <dbReference type="ChEBI" id="CHEBI:17996"/>
    </ligand>
</feature>
<feature type="site" description="Mediates proton transfer from the outer aqueous phase to the interior of the protein; involved in linking H(+) and Cl(-) transport">
    <location>
        <position position="148"/>
    </location>
</feature>
<feature type="site" description="Mediates proton transfer from the protein to the inner aqueous phase">
    <location>
        <position position="203"/>
    </location>
</feature>
<feature type="helix" evidence="4">
    <location>
        <begin position="13"/>
        <end position="25"/>
    </location>
</feature>
<feature type="helix" evidence="4">
    <location>
        <begin position="32"/>
        <end position="66"/>
    </location>
</feature>
<feature type="turn" evidence="4">
    <location>
        <begin position="67"/>
        <end position="69"/>
    </location>
</feature>
<feature type="helix" evidence="4">
    <location>
        <begin position="70"/>
        <end position="73"/>
    </location>
</feature>
<feature type="helix" evidence="4">
    <location>
        <begin position="75"/>
        <end position="99"/>
    </location>
</feature>
<feature type="helix" evidence="4">
    <location>
        <begin position="102"/>
        <end position="104"/>
    </location>
</feature>
<feature type="helix" evidence="4">
    <location>
        <begin position="109"/>
        <end position="116"/>
    </location>
</feature>
<feature type="helix" evidence="4">
    <location>
        <begin position="124"/>
        <end position="140"/>
    </location>
</feature>
<feature type="helix" evidence="4">
    <location>
        <begin position="148"/>
        <end position="164"/>
    </location>
</feature>
<feature type="turn" evidence="4">
    <location>
        <begin position="165"/>
        <end position="167"/>
    </location>
</feature>
<feature type="helix" evidence="4">
    <location>
        <begin position="171"/>
        <end position="190"/>
    </location>
</feature>
<feature type="helix" evidence="4">
    <location>
        <begin position="193"/>
        <end position="202"/>
    </location>
</feature>
<feature type="helix" evidence="4">
    <location>
        <begin position="215"/>
        <end position="233"/>
    </location>
</feature>
<feature type="helix" evidence="4">
    <location>
        <begin position="249"/>
        <end position="251"/>
    </location>
</feature>
<feature type="helix" evidence="4">
    <location>
        <begin position="252"/>
        <end position="284"/>
    </location>
</feature>
<feature type="helix" evidence="4">
    <location>
        <begin position="288"/>
        <end position="307"/>
    </location>
</feature>
<feature type="helix" evidence="4">
    <location>
        <begin position="310"/>
        <end position="312"/>
    </location>
</feature>
<feature type="strand" evidence="4">
    <location>
        <begin position="313"/>
        <end position="316"/>
    </location>
</feature>
<feature type="turn" evidence="4">
    <location>
        <begin position="317"/>
        <end position="319"/>
    </location>
</feature>
<feature type="helix" evidence="4">
    <location>
        <begin position="320"/>
        <end position="324"/>
    </location>
</feature>
<feature type="helix" evidence="4">
    <location>
        <begin position="330"/>
        <end position="350"/>
    </location>
</feature>
<feature type="strand" evidence="4">
    <location>
        <begin position="353"/>
        <end position="356"/>
    </location>
</feature>
<feature type="helix" evidence="4">
    <location>
        <begin position="357"/>
        <end position="378"/>
    </location>
</feature>
<feature type="helix" evidence="4">
    <location>
        <begin position="380"/>
        <end position="382"/>
    </location>
</feature>
<feature type="helix" evidence="4">
    <location>
        <begin position="386"/>
        <end position="394"/>
    </location>
</feature>
<feature type="helix" evidence="4">
    <location>
        <begin position="396"/>
        <end position="401"/>
    </location>
</feature>
<feature type="helix" evidence="4">
    <location>
        <begin position="405"/>
        <end position="416"/>
    </location>
</feature>
<feature type="helix" evidence="4">
    <location>
        <begin position="419"/>
        <end position="421"/>
    </location>
</feature>
<feature type="helix" evidence="4">
    <location>
        <begin position="422"/>
        <end position="438"/>
    </location>
</feature>
<feature type="helix" evidence="4">
    <location>
        <begin position="444"/>
        <end position="459"/>
    </location>
</feature>